<reference key="1">
    <citation type="journal article" date="2005" name="Nature">
        <title>The genome of the social amoeba Dictyostelium discoideum.</title>
        <authorList>
            <person name="Eichinger L."/>
            <person name="Pachebat J.A."/>
            <person name="Gloeckner G."/>
            <person name="Rajandream M.A."/>
            <person name="Sucgang R."/>
            <person name="Berriman M."/>
            <person name="Song J."/>
            <person name="Olsen R."/>
            <person name="Szafranski K."/>
            <person name="Xu Q."/>
            <person name="Tunggal B."/>
            <person name="Kummerfeld S."/>
            <person name="Madera M."/>
            <person name="Konfortov B.A."/>
            <person name="Rivero F."/>
            <person name="Bankier A.T."/>
            <person name="Lehmann R."/>
            <person name="Hamlin N."/>
            <person name="Davies R."/>
            <person name="Gaudet P."/>
            <person name="Fey P."/>
            <person name="Pilcher K."/>
            <person name="Chen G."/>
            <person name="Saunders D."/>
            <person name="Sodergren E.J."/>
            <person name="Davis P."/>
            <person name="Kerhornou A."/>
            <person name="Nie X."/>
            <person name="Hall N."/>
            <person name="Anjard C."/>
            <person name="Hemphill L."/>
            <person name="Bason N."/>
            <person name="Farbrother P."/>
            <person name="Desany B."/>
            <person name="Just E."/>
            <person name="Morio T."/>
            <person name="Rost R."/>
            <person name="Churcher C.M."/>
            <person name="Cooper J."/>
            <person name="Haydock S."/>
            <person name="van Driessche N."/>
            <person name="Cronin A."/>
            <person name="Goodhead I."/>
            <person name="Muzny D.M."/>
            <person name="Mourier T."/>
            <person name="Pain A."/>
            <person name="Lu M."/>
            <person name="Harper D."/>
            <person name="Lindsay R."/>
            <person name="Hauser H."/>
            <person name="James K.D."/>
            <person name="Quiles M."/>
            <person name="Madan Babu M."/>
            <person name="Saito T."/>
            <person name="Buchrieser C."/>
            <person name="Wardroper A."/>
            <person name="Felder M."/>
            <person name="Thangavelu M."/>
            <person name="Johnson D."/>
            <person name="Knights A."/>
            <person name="Loulseged H."/>
            <person name="Mungall K.L."/>
            <person name="Oliver K."/>
            <person name="Price C."/>
            <person name="Quail M.A."/>
            <person name="Urushihara H."/>
            <person name="Hernandez J."/>
            <person name="Rabbinowitsch E."/>
            <person name="Steffen D."/>
            <person name="Sanders M."/>
            <person name="Ma J."/>
            <person name="Kohara Y."/>
            <person name="Sharp S."/>
            <person name="Simmonds M.N."/>
            <person name="Spiegler S."/>
            <person name="Tivey A."/>
            <person name="Sugano S."/>
            <person name="White B."/>
            <person name="Walker D."/>
            <person name="Woodward J.R."/>
            <person name="Winckler T."/>
            <person name="Tanaka Y."/>
            <person name="Shaulsky G."/>
            <person name="Schleicher M."/>
            <person name="Weinstock G.M."/>
            <person name="Rosenthal A."/>
            <person name="Cox E.C."/>
            <person name="Chisholm R.L."/>
            <person name="Gibbs R.A."/>
            <person name="Loomis W.F."/>
            <person name="Platzer M."/>
            <person name="Kay R.R."/>
            <person name="Williams J.G."/>
            <person name="Dear P.H."/>
            <person name="Noegel A.A."/>
            <person name="Barrell B.G."/>
            <person name="Kuspa A."/>
        </authorList>
    </citation>
    <scope>NUCLEOTIDE SEQUENCE [LARGE SCALE GENOMIC DNA]</scope>
    <source>
        <strain>AX4</strain>
    </source>
</reference>
<gene>
    <name type="primary">DG1062</name>
    <name type="ORF">DDB_G0286351</name>
</gene>
<protein>
    <recommendedName>
        <fullName>Developmental gene 1062 protein</fullName>
    </recommendedName>
</protein>
<accession>Q54LR0</accession>
<keyword id="KW-1185">Reference proteome</keyword>
<feature type="chain" id="PRO_0000389555" description="Developmental gene 1062 protein">
    <location>
        <begin position="1"/>
        <end position="607"/>
    </location>
</feature>
<feature type="region of interest" description="Disordered" evidence="1">
    <location>
        <begin position="62"/>
        <end position="84"/>
    </location>
</feature>
<feature type="region of interest" description="Disordered" evidence="1">
    <location>
        <begin position="334"/>
        <end position="451"/>
    </location>
</feature>
<feature type="region of interest" description="Disordered" evidence="1">
    <location>
        <begin position="568"/>
        <end position="602"/>
    </location>
</feature>
<feature type="compositionally biased region" description="Low complexity" evidence="1">
    <location>
        <begin position="334"/>
        <end position="363"/>
    </location>
</feature>
<feature type="compositionally biased region" description="Acidic residues" evidence="1">
    <location>
        <begin position="364"/>
        <end position="382"/>
    </location>
</feature>
<feature type="compositionally biased region" description="Low complexity" evidence="1">
    <location>
        <begin position="383"/>
        <end position="451"/>
    </location>
</feature>
<feature type="compositionally biased region" description="Low complexity" evidence="1">
    <location>
        <begin position="568"/>
        <end position="582"/>
    </location>
</feature>
<organism>
    <name type="scientific">Dictyostelium discoideum</name>
    <name type="common">Social amoeba</name>
    <dbReference type="NCBI Taxonomy" id="44689"/>
    <lineage>
        <taxon>Eukaryota</taxon>
        <taxon>Amoebozoa</taxon>
        <taxon>Evosea</taxon>
        <taxon>Eumycetozoa</taxon>
        <taxon>Dictyostelia</taxon>
        <taxon>Dictyosteliales</taxon>
        <taxon>Dictyosteliaceae</taxon>
        <taxon>Dictyostelium</taxon>
    </lineage>
</organism>
<proteinExistence type="predicted"/>
<evidence type="ECO:0000256" key="1">
    <source>
        <dbReference type="SAM" id="MobiDB-lite"/>
    </source>
</evidence>
<sequence length="607" mass="68137">MIYNQALIEITKQGAVAVEEIKFSPPKLQTLISSIQNGGSPIINKNGSPAANALKNKQILQLQGQQQQQQQQQQNHSQQQHNNQSSVYSLNSLNPYYVQQVLCQLQKPHNFIKQVHVVVKNTPFGISMKSNDPQFNFHNYVIKATLLYDCDPPKMVDFIHNEPLQYVATVSEDGTEVVVDVKVGILSSQHQGSMFLAVLHISHTSVPSPSPNEPIMTILNNIGGNSIANLNSQLPNPIYNLCVVSHPIRIVSKVDHVKKEGIPILKKKTFHEILTDKLKKLQKFQDSQSKWIKNLYQQHLIEFDMEPYCSKKDQNNNNNNNNSNSNCQNGGGSICDDSSNSSTPSLSSYSNGNNKYNNNNNDSSESDESDDDDNNDDDDNDSIDFNISKQKNQQHLQQQLLNHQSKQQKVSSTNNNTTTTTSSSSASSIQQKQQPVQPQQQKQQNQSSNFQNSFNRVVEAFKYVPESERKDIITKMVEQLRSDDLEQLVATFMDELGVGDANSDVSSTKGGNNNNNNSIGCFCENCPSKKELERFQGLCMNFFVPQSTLNPMNNQQLLYSSLFSSSNDNNTQSQMNNSISVNNHHHHHHHQPNNSNLTNDLLQLPIV</sequence>
<dbReference type="EMBL" id="AAFI02000085">
    <property type="protein sequence ID" value="EAL64200.1"/>
    <property type="molecule type" value="Genomic_DNA"/>
</dbReference>
<dbReference type="RefSeq" id="XP_637770.1">
    <property type="nucleotide sequence ID" value="XM_632678.1"/>
</dbReference>
<dbReference type="SMR" id="Q54LR0"/>
<dbReference type="FunCoup" id="Q54LR0">
    <property type="interactions" value="226"/>
</dbReference>
<dbReference type="STRING" id="44689.Q54LR0"/>
<dbReference type="GlyGen" id="Q54LR0">
    <property type="glycosylation" value="1 site"/>
</dbReference>
<dbReference type="PaxDb" id="44689-DDB0191143"/>
<dbReference type="EnsemblProtists" id="EAL64200">
    <property type="protein sequence ID" value="EAL64200"/>
    <property type="gene ID" value="DDB_G0286351"/>
</dbReference>
<dbReference type="GeneID" id="8625634"/>
<dbReference type="KEGG" id="ddi:DDB_G0286351"/>
<dbReference type="dictyBase" id="DDB_G0286351">
    <property type="gene designation" value="cdl1A"/>
</dbReference>
<dbReference type="VEuPathDB" id="AmoebaDB:DDB_G0286351"/>
<dbReference type="eggNOG" id="ENOG502QZR1">
    <property type="taxonomic scope" value="Eukaryota"/>
</dbReference>
<dbReference type="HOGENOM" id="CLU_031435_0_0_1"/>
<dbReference type="InParanoid" id="Q54LR0"/>
<dbReference type="OMA" id="CENCPSK"/>
<dbReference type="PRO" id="PR:Q54LR0"/>
<dbReference type="Proteomes" id="UP000002195">
    <property type="component" value="Chromosome 4"/>
</dbReference>
<dbReference type="GO" id="GO:0005634">
    <property type="term" value="C:nucleus"/>
    <property type="evidence" value="ECO:0000250"/>
    <property type="project" value="dictyBase"/>
</dbReference>
<dbReference type="GO" id="GO:0043565">
    <property type="term" value="F:sequence-specific DNA binding"/>
    <property type="evidence" value="ECO:0000250"/>
    <property type="project" value="dictyBase"/>
</dbReference>
<dbReference type="GO" id="GO:0006355">
    <property type="term" value="P:regulation of DNA-templated transcription"/>
    <property type="evidence" value="ECO:0000315"/>
    <property type="project" value="dictyBase"/>
</dbReference>
<dbReference type="GO" id="GO:0036360">
    <property type="term" value="P:sorocarp stalk morphogenesis"/>
    <property type="evidence" value="ECO:0000315"/>
    <property type="project" value="dictyBase"/>
</dbReference>
<dbReference type="InterPro" id="IPR040430">
    <property type="entry name" value="CudA-like"/>
</dbReference>
<dbReference type="PANTHER" id="PTHR38092:SF5">
    <property type="entry name" value="DEVELOPMENTAL GENE 1062 PROTEIN"/>
    <property type="match status" value="1"/>
</dbReference>
<dbReference type="PANTHER" id="PTHR38092">
    <property type="entry name" value="REGULATOR CUDA, PUTATIVE-RELATED"/>
    <property type="match status" value="1"/>
</dbReference>
<name>D1062_DICDI</name>